<comment type="similarity">
    <text evidence="1">Belongs to the bacterial ribosomal protein bS16 family.</text>
</comment>
<feature type="chain" id="PRO_0000243858" description="Small ribosomal subunit protein bS16">
    <location>
        <begin position="1"/>
        <end position="83"/>
    </location>
</feature>
<proteinExistence type="inferred from homology"/>
<dbReference type="EMBL" id="CP000267">
    <property type="protein sequence ID" value="ABD69135.1"/>
    <property type="molecule type" value="Genomic_DNA"/>
</dbReference>
<dbReference type="RefSeq" id="WP_011463703.1">
    <property type="nucleotide sequence ID" value="NC_007908.1"/>
</dbReference>
<dbReference type="SMR" id="Q21YL8"/>
<dbReference type="STRING" id="338969.Rfer_1402"/>
<dbReference type="KEGG" id="rfr:Rfer_1402"/>
<dbReference type="eggNOG" id="COG0228">
    <property type="taxonomic scope" value="Bacteria"/>
</dbReference>
<dbReference type="HOGENOM" id="CLU_100590_5_1_4"/>
<dbReference type="OrthoDB" id="9807878at2"/>
<dbReference type="Proteomes" id="UP000008332">
    <property type="component" value="Chromosome"/>
</dbReference>
<dbReference type="GO" id="GO:0005737">
    <property type="term" value="C:cytoplasm"/>
    <property type="evidence" value="ECO:0007669"/>
    <property type="project" value="UniProtKB-ARBA"/>
</dbReference>
<dbReference type="GO" id="GO:0015935">
    <property type="term" value="C:small ribosomal subunit"/>
    <property type="evidence" value="ECO:0007669"/>
    <property type="project" value="TreeGrafter"/>
</dbReference>
<dbReference type="GO" id="GO:0003735">
    <property type="term" value="F:structural constituent of ribosome"/>
    <property type="evidence" value="ECO:0007669"/>
    <property type="project" value="InterPro"/>
</dbReference>
<dbReference type="GO" id="GO:0006412">
    <property type="term" value="P:translation"/>
    <property type="evidence" value="ECO:0007669"/>
    <property type="project" value="UniProtKB-UniRule"/>
</dbReference>
<dbReference type="Gene3D" id="3.30.1320.10">
    <property type="match status" value="1"/>
</dbReference>
<dbReference type="HAMAP" id="MF_00385">
    <property type="entry name" value="Ribosomal_bS16"/>
    <property type="match status" value="1"/>
</dbReference>
<dbReference type="InterPro" id="IPR000307">
    <property type="entry name" value="Ribosomal_bS16"/>
</dbReference>
<dbReference type="InterPro" id="IPR020592">
    <property type="entry name" value="Ribosomal_bS16_CS"/>
</dbReference>
<dbReference type="InterPro" id="IPR023803">
    <property type="entry name" value="Ribosomal_bS16_dom_sf"/>
</dbReference>
<dbReference type="NCBIfam" id="TIGR00002">
    <property type="entry name" value="S16"/>
    <property type="match status" value="1"/>
</dbReference>
<dbReference type="PANTHER" id="PTHR12919">
    <property type="entry name" value="30S RIBOSOMAL PROTEIN S16"/>
    <property type="match status" value="1"/>
</dbReference>
<dbReference type="PANTHER" id="PTHR12919:SF20">
    <property type="entry name" value="SMALL RIBOSOMAL SUBUNIT PROTEIN BS16M"/>
    <property type="match status" value="1"/>
</dbReference>
<dbReference type="Pfam" id="PF00886">
    <property type="entry name" value="Ribosomal_S16"/>
    <property type="match status" value="1"/>
</dbReference>
<dbReference type="SUPFAM" id="SSF54565">
    <property type="entry name" value="Ribosomal protein S16"/>
    <property type="match status" value="1"/>
</dbReference>
<dbReference type="PROSITE" id="PS00732">
    <property type="entry name" value="RIBOSOMAL_S16"/>
    <property type="match status" value="1"/>
</dbReference>
<protein>
    <recommendedName>
        <fullName evidence="1">Small ribosomal subunit protein bS16</fullName>
    </recommendedName>
    <alternativeName>
        <fullName evidence="2">30S ribosomal protein S16</fullName>
    </alternativeName>
</protein>
<evidence type="ECO:0000255" key="1">
    <source>
        <dbReference type="HAMAP-Rule" id="MF_00385"/>
    </source>
</evidence>
<evidence type="ECO:0000305" key="2"/>
<gene>
    <name evidence="1" type="primary">rpsP</name>
    <name type="ordered locus">Rfer_1402</name>
</gene>
<sequence length="83" mass="9319">MVVIRLARGGAKARPFFNIVVADKRTRRDGRFIERLGFYNPIATANEESIRIAQDRLTYWRSVGAQASPTVERLISQAAKKAA</sequence>
<reference key="1">
    <citation type="submission" date="2006-02" db="EMBL/GenBank/DDBJ databases">
        <title>Complete sequence of chromosome of Rhodoferax ferrireducens DSM 15236.</title>
        <authorList>
            <person name="Copeland A."/>
            <person name="Lucas S."/>
            <person name="Lapidus A."/>
            <person name="Barry K."/>
            <person name="Detter J.C."/>
            <person name="Glavina del Rio T."/>
            <person name="Hammon N."/>
            <person name="Israni S."/>
            <person name="Pitluck S."/>
            <person name="Brettin T."/>
            <person name="Bruce D."/>
            <person name="Han C."/>
            <person name="Tapia R."/>
            <person name="Gilna P."/>
            <person name="Kiss H."/>
            <person name="Schmutz J."/>
            <person name="Larimer F."/>
            <person name="Land M."/>
            <person name="Kyrpides N."/>
            <person name="Ivanova N."/>
            <person name="Richardson P."/>
        </authorList>
    </citation>
    <scope>NUCLEOTIDE SEQUENCE [LARGE SCALE GENOMIC DNA]</scope>
    <source>
        <strain>ATCC BAA-621 / DSM 15236 / T118</strain>
    </source>
</reference>
<organism>
    <name type="scientific">Albidiferax ferrireducens (strain ATCC BAA-621 / DSM 15236 / T118)</name>
    <name type="common">Rhodoferax ferrireducens</name>
    <dbReference type="NCBI Taxonomy" id="338969"/>
    <lineage>
        <taxon>Bacteria</taxon>
        <taxon>Pseudomonadati</taxon>
        <taxon>Pseudomonadota</taxon>
        <taxon>Betaproteobacteria</taxon>
        <taxon>Burkholderiales</taxon>
        <taxon>Comamonadaceae</taxon>
        <taxon>Rhodoferax</taxon>
    </lineage>
</organism>
<keyword id="KW-1185">Reference proteome</keyword>
<keyword id="KW-0687">Ribonucleoprotein</keyword>
<keyword id="KW-0689">Ribosomal protein</keyword>
<accession>Q21YL8</accession>
<name>RS16_ALBFT</name>